<protein>
    <recommendedName>
        <fullName evidence="1">Prokaryotic ubiquitin-like protein Pup</fullName>
    </recommendedName>
    <alternativeName>
        <fullName evidence="1">Bacterial ubiquitin-like modifier</fullName>
    </alternativeName>
</protein>
<feature type="chain" id="PRO_0000390568" description="Prokaryotic ubiquitin-like protein Pup">
    <location>
        <begin position="1"/>
        <end position="67"/>
    </location>
</feature>
<feature type="region of interest" description="Disordered" evidence="2">
    <location>
        <begin position="1"/>
        <end position="48"/>
    </location>
</feature>
<feature type="region of interest" description="ARC ATPase binding" evidence="1">
    <location>
        <begin position="25"/>
        <end position="61"/>
    </location>
</feature>
<feature type="compositionally biased region" description="Low complexity" evidence="2">
    <location>
        <begin position="1"/>
        <end position="13"/>
    </location>
</feature>
<feature type="compositionally biased region" description="Acidic residues" evidence="2">
    <location>
        <begin position="38"/>
        <end position="48"/>
    </location>
</feature>
<feature type="modified residue" description="Deamidated glutamine" evidence="1">
    <location>
        <position position="67"/>
    </location>
</feature>
<feature type="cross-link" description="Isoglutamyl lysine isopeptide (Gln-Lys) (interchain with K-? in acceptor proteins)" evidence="1">
    <location>
        <position position="67"/>
    </location>
</feature>
<name>PUP_PSECP</name>
<sequence>MAGQEQQQPQSRDSQVDEDIPEAPPAPPEAQASASTEGVDDLLDEIDGVLESNAEEFVRAFVQKGGQ</sequence>
<organism>
    <name type="scientific">Pseudarthrobacter chlorophenolicus (strain ATCC 700700 / DSM 12829 / CIP 107037 / JCM 12360 / KCTC 9906 / NCIMB 13794 / A6)</name>
    <name type="common">Arthrobacter chlorophenolicus</name>
    <dbReference type="NCBI Taxonomy" id="452863"/>
    <lineage>
        <taxon>Bacteria</taxon>
        <taxon>Bacillati</taxon>
        <taxon>Actinomycetota</taxon>
        <taxon>Actinomycetes</taxon>
        <taxon>Micrococcales</taxon>
        <taxon>Micrococcaceae</taxon>
        <taxon>Pseudarthrobacter</taxon>
    </lineage>
</organism>
<gene>
    <name evidence="1" type="primary">pup</name>
    <name type="ordered locus">Achl_1918</name>
</gene>
<keyword id="KW-1017">Isopeptide bond</keyword>
<keyword id="KW-0833">Ubl conjugation pathway</keyword>
<accession>B8H8L5</accession>
<reference key="1">
    <citation type="submission" date="2009-01" db="EMBL/GenBank/DDBJ databases">
        <title>Complete sequence of chromosome of Arthrobacter chlorophenolicus A6.</title>
        <authorList>
            <consortium name="US DOE Joint Genome Institute"/>
            <person name="Lucas S."/>
            <person name="Copeland A."/>
            <person name="Lapidus A."/>
            <person name="Glavina del Rio T."/>
            <person name="Tice H."/>
            <person name="Bruce D."/>
            <person name="Goodwin L."/>
            <person name="Pitluck S."/>
            <person name="Goltsman E."/>
            <person name="Clum A."/>
            <person name="Larimer F."/>
            <person name="Land M."/>
            <person name="Hauser L."/>
            <person name="Kyrpides N."/>
            <person name="Mikhailova N."/>
            <person name="Jansson J."/>
            <person name="Richardson P."/>
        </authorList>
    </citation>
    <scope>NUCLEOTIDE SEQUENCE [LARGE SCALE GENOMIC DNA]</scope>
    <source>
        <strain>ATCC 700700 / DSM 12829 / CIP 107037 / JCM 12360 / KCTC 9906 / NCIMB 13794 / A6</strain>
    </source>
</reference>
<proteinExistence type="inferred from homology"/>
<dbReference type="EMBL" id="CP001341">
    <property type="protein sequence ID" value="ACL39893.1"/>
    <property type="molecule type" value="Genomic_DNA"/>
</dbReference>
<dbReference type="RefSeq" id="WP_015937113.1">
    <property type="nucleotide sequence ID" value="NC_011886.1"/>
</dbReference>
<dbReference type="SMR" id="B8H8L5"/>
<dbReference type="STRING" id="452863.Achl_1918"/>
<dbReference type="KEGG" id="ach:Achl_1918"/>
<dbReference type="eggNOG" id="ENOG50333JS">
    <property type="taxonomic scope" value="Bacteria"/>
</dbReference>
<dbReference type="HOGENOM" id="CLU_183816_1_0_11"/>
<dbReference type="OrthoDB" id="3254977at2"/>
<dbReference type="UniPathway" id="UPA00997"/>
<dbReference type="Proteomes" id="UP000002505">
    <property type="component" value="Chromosome"/>
</dbReference>
<dbReference type="GO" id="GO:0070628">
    <property type="term" value="F:proteasome binding"/>
    <property type="evidence" value="ECO:0007669"/>
    <property type="project" value="UniProtKB-UniRule"/>
</dbReference>
<dbReference type="GO" id="GO:0031386">
    <property type="term" value="F:protein tag activity"/>
    <property type="evidence" value="ECO:0007669"/>
    <property type="project" value="UniProtKB-UniRule"/>
</dbReference>
<dbReference type="GO" id="GO:0019941">
    <property type="term" value="P:modification-dependent protein catabolic process"/>
    <property type="evidence" value="ECO:0007669"/>
    <property type="project" value="UniProtKB-UniRule"/>
</dbReference>
<dbReference type="GO" id="GO:0010498">
    <property type="term" value="P:proteasomal protein catabolic process"/>
    <property type="evidence" value="ECO:0007669"/>
    <property type="project" value="UniProtKB-UniRule"/>
</dbReference>
<dbReference type="GO" id="GO:0070490">
    <property type="term" value="P:protein pupylation"/>
    <property type="evidence" value="ECO:0007669"/>
    <property type="project" value="UniProtKB-UniRule"/>
</dbReference>
<dbReference type="HAMAP" id="MF_02106">
    <property type="entry name" value="Pup"/>
    <property type="match status" value="1"/>
</dbReference>
<dbReference type="InterPro" id="IPR008515">
    <property type="entry name" value="Ubiquitin-like_Pup"/>
</dbReference>
<dbReference type="NCBIfam" id="TIGR03687">
    <property type="entry name" value="pupylate_cterm"/>
    <property type="match status" value="1"/>
</dbReference>
<dbReference type="Pfam" id="PF05639">
    <property type="entry name" value="Pup"/>
    <property type="match status" value="1"/>
</dbReference>
<evidence type="ECO:0000255" key="1">
    <source>
        <dbReference type="HAMAP-Rule" id="MF_02106"/>
    </source>
</evidence>
<evidence type="ECO:0000256" key="2">
    <source>
        <dbReference type="SAM" id="MobiDB-lite"/>
    </source>
</evidence>
<comment type="function">
    <text evidence="1">Protein modifier that is covalently attached to lysine residues of substrate proteins, thereby targeting them for proteasomal degradation. The tagging system is termed pupylation.</text>
</comment>
<comment type="pathway">
    <text evidence="1">Protein degradation; proteasomal Pup-dependent pathway.</text>
</comment>
<comment type="subunit">
    <text evidence="1">Strongly interacts with the proteasome-associated ATPase ARC through a hydrophobic interface; the interacting region of Pup lies in its C-terminal half. There is one Pup binding site per ARC hexamer ring.</text>
</comment>
<comment type="domain">
    <text evidence="1">The N-terminal unstructured half of Pup provides a signal required to initiate unfolding and degradation by the proteasome but is not needed for pupylation, while the C-terminal helical half of Pup interacts with ARC to target proteins to the proteasome.</text>
</comment>
<comment type="PTM">
    <text evidence="1">Is modified by deamidation of its C-terminal glutamine to glutamate by the deamidase Dop, a prerequisite to the subsequent pupylation process.</text>
</comment>
<comment type="similarity">
    <text evidence="1">Belongs to the prokaryotic ubiquitin-like protein family.</text>
</comment>